<gene>
    <name type="primary">CNPY3</name>
</gene>
<comment type="function">
    <text evidence="1">Toll-like receptor (TLR)-specific co-chaperone for HSP90B1. Required for proper TLR folding, except that of TLR3, and hence controls TLR exit from the endoplasmic reticulum. Consequently, required for both innate and adaptive immune responses (By similarity).</text>
</comment>
<comment type="subunit">
    <text evidence="1">Interacts with HSP90B1; this interaction is disrupted in the presence of ATP. Interacts with TLR1, TLR2, TLR4 and TLR9 (By similarity).</text>
</comment>
<comment type="subcellular location">
    <subcellularLocation>
        <location evidence="1">Endoplasmic reticulum</location>
    </subcellularLocation>
</comment>
<comment type="similarity">
    <text evidence="4">Belongs to the canopy family.</text>
</comment>
<organism>
    <name type="scientific">Bos taurus</name>
    <name type="common">Bovine</name>
    <dbReference type="NCBI Taxonomy" id="9913"/>
    <lineage>
        <taxon>Eukaryota</taxon>
        <taxon>Metazoa</taxon>
        <taxon>Chordata</taxon>
        <taxon>Craniata</taxon>
        <taxon>Vertebrata</taxon>
        <taxon>Euteleostomi</taxon>
        <taxon>Mammalia</taxon>
        <taxon>Eutheria</taxon>
        <taxon>Laurasiatheria</taxon>
        <taxon>Artiodactyla</taxon>
        <taxon>Ruminantia</taxon>
        <taxon>Pecora</taxon>
        <taxon>Bovidae</taxon>
        <taxon>Bovinae</taxon>
        <taxon>Bos</taxon>
    </lineage>
</organism>
<sequence>MEPLPEPASGPRPRPHRLLLLSLLLLLLPLLPAPELGPRQARAEDTDWVRLPSKCEVCKYVAVELKSAFEETGKTKEVIDTGYGILDRKASGVKYTKSDLRLIEVTETICKRLLDYSLHKERTGSNRFAKGMSETFETLHNLVHKGVKVVMDIPYELWNETSAEVADLKKQCDVLVEEFEEVIEDWYRNHQEEDLTQFLCANHVLKGKDASCLAEQWSGKKGDTAALGGKKSKKKSGRAKGLGGGSSKQRKELGDLDGDPSPEEDEGIQKASPLTHSPPDEL</sequence>
<feature type="signal peptide" evidence="2">
    <location>
        <begin position="1"/>
        <end position="33"/>
    </location>
</feature>
<feature type="chain" id="PRO_0000313779" description="Protein canopy homolog 3">
    <location>
        <begin position="34"/>
        <end position="282"/>
    </location>
</feature>
<feature type="domain" description="Saposin B-type">
    <location>
        <begin position="53"/>
        <end position="275"/>
    </location>
</feature>
<feature type="region of interest" description="Disordered" evidence="3">
    <location>
        <begin position="221"/>
        <end position="282"/>
    </location>
</feature>
<feature type="coiled-coil region" evidence="2">
    <location>
        <begin position="159"/>
        <end position="185"/>
    </location>
</feature>
<feature type="compositionally biased region" description="Acidic residues" evidence="3">
    <location>
        <begin position="255"/>
        <end position="266"/>
    </location>
</feature>
<feature type="glycosylation site" description="N-linked (GlcNAc...) asparagine" evidence="2">
    <location>
        <position position="159"/>
    </location>
</feature>
<feature type="disulfide bond" evidence="1">
    <location>
        <begin position="55"/>
        <end position="212"/>
    </location>
</feature>
<feature type="disulfide bond" evidence="1">
    <location>
        <begin position="58"/>
        <end position="200"/>
    </location>
</feature>
<feature type="disulfide bond" evidence="1">
    <location>
        <begin position="110"/>
        <end position="172"/>
    </location>
</feature>
<proteinExistence type="evidence at transcript level"/>
<protein>
    <recommendedName>
        <fullName>Protein canopy homolog 3</fullName>
    </recommendedName>
</protein>
<dbReference type="EMBL" id="BC119829">
    <property type="protein sequence ID" value="AAI19830.1"/>
    <property type="molecule type" value="mRNA"/>
</dbReference>
<dbReference type="RefSeq" id="NP_001068907.1">
    <property type="nucleotide sequence ID" value="NM_001075439.2"/>
</dbReference>
<dbReference type="FunCoup" id="Q0P5N1">
    <property type="interactions" value="2479"/>
</dbReference>
<dbReference type="STRING" id="9913.ENSBTAP00000021132"/>
<dbReference type="GlyCosmos" id="Q0P5N1">
    <property type="glycosylation" value="1 site, No reported glycans"/>
</dbReference>
<dbReference type="GlyGen" id="Q0P5N1">
    <property type="glycosylation" value="1 site"/>
</dbReference>
<dbReference type="Ensembl" id="ENSBTAT00000021132.5">
    <property type="protein sequence ID" value="ENSBTAP00000021132.5"/>
    <property type="gene ID" value="ENSBTAG00000015900.7"/>
</dbReference>
<dbReference type="GeneID" id="510220"/>
<dbReference type="KEGG" id="bta:510220"/>
<dbReference type="CTD" id="10695"/>
<dbReference type="VEuPathDB" id="HostDB:ENSBTAG00000015900"/>
<dbReference type="VGNC" id="VGNC:27527">
    <property type="gene designation" value="CNPY3"/>
</dbReference>
<dbReference type="eggNOG" id="KOG4052">
    <property type="taxonomic scope" value="Eukaryota"/>
</dbReference>
<dbReference type="GeneTree" id="ENSGT00390000014072"/>
<dbReference type="InParanoid" id="Q0P5N1"/>
<dbReference type="OMA" id="GQDKACL"/>
<dbReference type="OrthoDB" id="6020060at2759"/>
<dbReference type="Reactome" id="R-BTA-1679131">
    <property type="pathway name" value="Trafficking and processing of endosomal TLR"/>
</dbReference>
<dbReference type="Proteomes" id="UP000009136">
    <property type="component" value="Chromosome 23"/>
</dbReference>
<dbReference type="Bgee" id="ENSBTAG00000015900">
    <property type="expression patterns" value="Expressed in monocyte and 106 other cell types or tissues"/>
</dbReference>
<dbReference type="GO" id="GO:0005783">
    <property type="term" value="C:endoplasmic reticulum"/>
    <property type="evidence" value="ECO:0007669"/>
    <property type="project" value="UniProtKB-SubCell"/>
</dbReference>
<dbReference type="GO" id="GO:0005102">
    <property type="term" value="F:signaling receptor binding"/>
    <property type="evidence" value="ECO:0000318"/>
    <property type="project" value="GO_Central"/>
</dbReference>
<dbReference type="GO" id="GO:0045087">
    <property type="term" value="P:innate immune response"/>
    <property type="evidence" value="ECO:0007669"/>
    <property type="project" value="UniProtKB-KW"/>
</dbReference>
<dbReference type="InterPro" id="IPR021852">
    <property type="entry name" value="DUF3456"/>
</dbReference>
<dbReference type="PANTHER" id="PTHR15382">
    <property type="entry name" value="CTG4A-RELATED"/>
    <property type="match status" value="1"/>
</dbReference>
<dbReference type="PANTHER" id="PTHR15382:SF2">
    <property type="entry name" value="PROTEIN CANOPY HOMOLOG 3"/>
    <property type="match status" value="1"/>
</dbReference>
<dbReference type="Pfam" id="PF11938">
    <property type="entry name" value="DUF3456"/>
    <property type="match status" value="1"/>
</dbReference>
<name>CNPY3_BOVIN</name>
<keyword id="KW-0143">Chaperone</keyword>
<keyword id="KW-0175">Coiled coil</keyword>
<keyword id="KW-1015">Disulfide bond</keyword>
<keyword id="KW-0256">Endoplasmic reticulum</keyword>
<keyword id="KW-0325">Glycoprotein</keyword>
<keyword id="KW-0391">Immunity</keyword>
<keyword id="KW-0399">Innate immunity</keyword>
<keyword id="KW-1185">Reference proteome</keyword>
<keyword id="KW-0732">Signal</keyword>
<reference key="1">
    <citation type="submission" date="2006-08" db="EMBL/GenBank/DDBJ databases">
        <authorList>
            <consortium name="NIH - Mammalian Gene Collection (MGC) project"/>
        </authorList>
    </citation>
    <scope>NUCLEOTIDE SEQUENCE [LARGE SCALE MRNA]</scope>
    <source>
        <strain>Hereford</strain>
        <tissue>Thymus</tissue>
    </source>
</reference>
<accession>Q0P5N1</accession>
<evidence type="ECO:0000250" key="1"/>
<evidence type="ECO:0000255" key="2"/>
<evidence type="ECO:0000256" key="3">
    <source>
        <dbReference type="SAM" id="MobiDB-lite"/>
    </source>
</evidence>
<evidence type="ECO:0000305" key="4"/>